<feature type="chain" id="PRO_0000155935" description="Ribonuclease Z">
    <location>
        <begin position="1"/>
        <end position="314"/>
    </location>
</feature>
<feature type="active site" description="Proton acceptor" evidence="1">
    <location>
        <position position="65"/>
    </location>
</feature>
<feature type="binding site" evidence="1">
    <location>
        <position position="61"/>
    </location>
    <ligand>
        <name>Zn(2+)</name>
        <dbReference type="ChEBI" id="CHEBI:29105"/>
        <label>1</label>
        <note>catalytic</note>
    </ligand>
</feature>
<feature type="binding site" evidence="1">
    <location>
        <position position="63"/>
    </location>
    <ligand>
        <name>Zn(2+)</name>
        <dbReference type="ChEBI" id="CHEBI:29105"/>
        <label>1</label>
        <note>catalytic</note>
    </ligand>
</feature>
<feature type="binding site" evidence="1">
    <location>
        <position position="65"/>
    </location>
    <ligand>
        <name>Zn(2+)</name>
        <dbReference type="ChEBI" id="CHEBI:29105"/>
        <label>2</label>
        <note>catalytic</note>
    </ligand>
</feature>
<feature type="binding site" evidence="1">
    <location>
        <position position="66"/>
    </location>
    <ligand>
        <name>Zn(2+)</name>
        <dbReference type="ChEBI" id="CHEBI:29105"/>
        <label>2</label>
        <note>catalytic</note>
    </ligand>
</feature>
<feature type="binding site" evidence="1">
    <location>
        <position position="137"/>
    </location>
    <ligand>
        <name>Zn(2+)</name>
        <dbReference type="ChEBI" id="CHEBI:29105"/>
        <label>1</label>
        <note>catalytic</note>
    </ligand>
</feature>
<feature type="binding site" evidence="1">
    <location>
        <position position="207"/>
    </location>
    <ligand>
        <name>Zn(2+)</name>
        <dbReference type="ChEBI" id="CHEBI:29105"/>
        <label>1</label>
        <note>catalytic</note>
    </ligand>
</feature>
<feature type="binding site" evidence="1">
    <location>
        <position position="207"/>
    </location>
    <ligand>
        <name>Zn(2+)</name>
        <dbReference type="ChEBI" id="CHEBI:29105"/>
        <label>2</label>
        <note>catalytic</note>
    </ligand>
</feature>
<feature type="binding site" evidence="1">
    <location>
        <position position="263"/>
    </location>
    <ligand>
        <name>Zn(2+)</name>
        <dbReference type="ChEBI" id="CHEBI:29105"/>
        <label>2</label>
        <note>catalytic</note>
    </ligand>
</feature>
<comment type="function">
    <text evidence="1">Zinc phosphodiesterase, which displays some tRNA 3'-processing endonuclease activity. Probably involved in tRNA maturation, by removing a 3'-trailer from precursor tRNA.</text>
</comment>
<comment type="catalytic activity">
    <reaction evidence="1">
        <text>Endonucleolytic cleavage of RNA, removing extra 3' nucleotides from tRNA precursor, generating 3' termini of tRNAs. A 3'-hydroxy group is left at the tRNA terminus and a 5'-phosphoryl group is left at the trailer molecule.</text>
        <dbReference type="EC" id="3.1.26.11"/>
    </reaction>
</comment>
<comment type="cofactor">
    <cofactor evidence="1">
        <name>Zn(2+)</name>
        <dbReference type="ChEBI" id="CHEBI:29105"/>
    </cofactor>
    <text evidence="1">Binds 2 Zn(2+) ions.</text>
</comment>
<comment type="subunit">
    <text evidence="1">Homodimer.</text>
</comment>
<comment type="similarity">
    <text evidence="1">Belongs to the RNase Z family.</text>
</comment>
<dbReference type="EC" id="3.1.26.11" evidence="1"/>
<dbReference type="EMBL" id="AP006878">
    <property type="protein sequence ID" value="BAD85303.1"/>
    <property type="molecule type" value="Genomic_DNA"/>
</dbReference>
<dbReference type="RefSeq" id="WP_011250065.1">
    <property type="nucleotide sequence ID" value="NC_006624.1"/>
</dbReference>
<dbReference type="SMR" id="Q5JE70"/>
<dbReference type="FunCoup" id="Q5JE70">
    <property type="interactions" value="121"/>
</dbReference>
<dbReference type="IntAct" id="Q5JE70">
    <property type="interactions" value="1"/>
</dbReference>
<dbReference type="MINT" id="Q5JE70"/>
<dbReference type="STRING" id="69014.TK1114"/>
<dbReference type="EnsemblBacteria" id="BAD85303">
    <property type="protein sequence ID" value="BAD85303"/>
    <property type="gene ID" value="TK1114"/>
</dbReference>
<dbReference type="GeneID" id="78447627"/>
<dbReference type="KEGG" id="tko:TK1114"/>
<dbReference type="PATRIC" id="fig|69014.16.peg.1090"/>
<dbReference type="eggNOG" id="arCOG00501">
    <property type="taxonomic scope" value="Archaea"/>
</dbReference>
<dbReference type="HOGENOM" id="CLU_031317_2_1_2"/>
<dbReference type="InParanoid" id="Q5JE70"/>
<dbReference type="OrthoDB" id="85118at2157"/>
<dbReference type="PhylomeDB" id="Q5JE70"/>
<dbReference type="Proteomes" id="UP000000536">
    <property type="component" value="Chromosome"/>
</dbReference>
<dbReference type="GO" id="GO:0042781">
    <property type="term" value="F:3'-tRNA processing endoribonuclease activity"/>
    <property type="evidence" value="ECO:0000318"/>
    <property type="project" value="GO_Central"/>
</dbReference>
<dbReference type="GO" id="GO:0008270">
    <property type="term" value="F:zinc ion binding"/>
    <property type="evidence" value="ECO:0007669"/>
    <property type="project" value="UniProtKB-UniRule"/>
</dbReference>
<dbReference type="CDD" id="cd07717">
    <property type="entry name" value="RNaseZ_ZiPD-like_MBL-fold"/>
    <property type="match status" value="1"/>
</dbReference>
<dbReference type="FunFam" id="3.60.15.10:FF:000180">
    <property type="entry name" value="Ribonuclease Z"/>
    <property type="match status" value="1"/>
</dbReference>
<dbReference type="Gene3D" id="3.60.15.10">
    <property type="entry name" value="Ribonuclease Z/Hydroxyacylglutathione hydrolase-like"/>
    <property type="match status" value="1"/>
</dbReference>
<dbReference type="HAMAP" id="MF_01818">
    <property type="entry name" value="RNase_Z_BN"/>
    <property type="match status" value="1"/>
</dbReference>
<dbReference type="InterPro" id="IPR001279">
    <property type="entry name" value="Metallo-B-lactamas"/>
</dbReference>
<dbReference type="InterPro" id="IPR036866">
    <property type="entry name" value="RibonucZ/Hydroxyglut_hydro"/>
</dbReference>
<dbReference type="InterPro" id="IPR013471">
    <property type="entry name" value="RNase_Z/BN"/>
</dbReference>
<dbReference type="NCBIfam" id="NF000801">
    <property type="entry name" value="PRK00055.1-3"/>
    <property type="match status" value="1"/>
</dbReference>
<dbReference type="NCBIfam" id="TIGR02651">
    <property type="entry name" value="RNase_Z"/>
    <property type="match status" value="1"/>
</dbReference>
<dbReference type="PANTHER" id="PTHR46018">
    <property type="entry name" value="ZINC PHOSPHODIESTERASE ELAC PROTEIN 1"/>
    <property type="match status" value="1"/>
</dbReference>
<dbReference type="PANTHER" id="PTHR46018:SF2">
    <property type="entry name" value="ZINC PHOSPHODIESTERASE ELAC PROTEIN 1"/>
    <property type="match status" value="1"/>
</dbReference>
<dbReference type="Pfam" id="PF12706">
    <property type="entry name" value="Lactamase_B_2"/>
    <property type="match status" value="2"/>
</dbReference>
<dbReference type="SMART" id="SM00849">
    <property type="entry name" value="Lactamase_B"/>
    <property type="match status" value="1"/>
</dbReference>
<dbReference type="SUPFAM" id="SSF56281">
    <property type="entry name" value="Metallo-hydrolase/oxidoreductase"/>
    <property type="match status" value="1"/>
</dbReference>
<proteinExistence type="inferred from homology"/>
<keyword id="KW-0255">Endonuclease</keyword>
<keyword id="KW-0378">Hydrolase</keyword>
<keyword id="KW-0479">Metal-binding</keyword>
<keyword id="KW-0540">Nuclease</keyword>
<keyword id="KW-1185">Reference proteome</keyword>
<keyword id="KW-0819">tRNA processing</keyword>
<keyword id="KW-0862">Zinc</keyword>
<reference key="1">
    <citation type="journal article" date="2005" name="Genome Res.">
        <title>Complete genome sequence of the hyperthermophilic archaeon Thermococcus kodakaraensis KOD1 and comparison with Pyrococcus genomes.</title>
        <authorList>
            <person name="Fukui T."/>
            <person name="Atomi H."/>
            <person name="Kanai T."/>
            <person name="Matsumi R."/>
            <person name="Fujiwara S."/>
            <person name="Imanaka T."/>
        </authorList>
    </citation>
    <scope>NUCLEOTIDE SEQUENCE [LARGE SCALE GENOMIC DNA]</scope>
    <source>
        <strain>ATCC BAA-918 / JCM 12380 / KOD1</strain>
    </source>
</reference>
<protein>
    <recommendedName>
        <fullName evidence="1">Ribonuclease Z</fullName>
        <shortName evidence="1">RNase Z</shortName>
        <ecNumber evidence="1">3.1.26.11</ecNumber>
    </recommendedName>
    <alternativeName>
        <fullName evidence="1">tRNA 3 endonuclease</fullName>
    </alternativeName>
    <alternativeName>
        <fullName evidence="1">tRNase Z</fullName>
    </alternativeName>
</protein>
<sequence length="314" mass="36419">MLEVFFLGTGGIMPTRERNVPAIALRYKGEIILFDAGEGTIRQMNTAKLSPMKVDKIFITHFHGDHYLGIPALIQTMNLWDRQKPLHIYGPKYTFQFVQNLLNSGFFRPGFDIHVHELGETRLKFGDYEIWSFKVEHGIPALGYVFKEKDRRGKFLKEKLREYGLEEGPILGKLEREGKIEWNGRIIRLEDVTGPRRKGLKIVYTGDTEPCERVKLFSERADLLIHEATYLNPGDRGDSYHSTVEEACDTARRAKVKLLALFHRAFRYSYEDYVEEALKICESLGVRAVVPRDFDVITFKSGTWELRNLLEERE</sequence>
<organism>
    <name type="scientific">Thermococcus kodakarensis (strain ATCC BAA-918 / JCM 12380 / KOD1)</name>
    <name type="common">Pyrococcus kodakaraensis (strain KOD1)</name>
    <dbReference type="NCBI Taxonomy" id="69014"/>
    <lineage>
        <taxon>Archaea</taxon>
        <taxon>Methanobacteriati</taxon>
        <taxon>Methanobacteriota</taxon>
        <taxon>Thermococci</taxon>
        <taxon>Thermococcales</taxon>
        <taxon>Thermococcaceae</taxon>
        <taxon>Thermococcus</taxon>
    </lineage>
</organism>
<name>RNZ_THEKO</name>
<accession>Q5JE70</accession>
<evidence type="ECO:0000255" key="1">
    <source>
        <dbReference type="HAMAP-Rule" id="MF_01818"/>
    </source>
</evidence>
<gene>
    <name evidence="1" type="primary">rnz</name>
    <name type="ordered locus">TK1114</name>
</gene>